<organism>
    <name type="scientific">Streptococcus pneumoniae serotype 2 (strain D39 / NCTC 7466)</name>
    <dbReference type="NCBI Taxonomy" id="373153"/>
    <lineage>
        <taxon>Bacteria</taxon>
        <taxon>Bacillati</taxon>
        <taxon>Bacillota</taxon>
        <taxon>Bacilli</taxon>
        <taxon>Lactobacillales</taxon>
        <taxon>Streptococcaceae</taxon>
        <taxon>Streptococcus</taxon>
    </lineage>
</organism>
<comment type="function">
    <text evidence="1">Functions in the biosynthesis of branched-chain amino acids. Catalyzes the dehydration of (2R,3R)-2,3-dihydroxy-3-methylpentanoate (2,3-dihydroxy-3-methylvalerate) into 2-oxo-3-methylpentanoate (2-oxo-3-methylvalerate) and of (2R)-2,3-dihydroxy-3-methylbutanoate (2,3-dihydroxyisovalerate) into 2-oxo-3-methylbutanoate (2-oxoisovalerate), the penultimate precursor to L-isoleucine and L-valine, respectively.</text>
</comment>
<comment type="catalytic activity">
    <reaction evidence="1">
        <text>(2R)-2,3-dihydroxy-3-methylbutanoate = 3-methyl-2-oxobutanoate + H2O</text>
        <dbReference type="Rhea" id="RHEA:24809"/>
        <dbReference type="ChEBI" id="CHEBI:11851"/>
        <dbReference type="ChEBI" id="CHEBI:15377"/>
        <dbReference type="ChEBI" id="CHEBI:49072"/>
        <dbReference type="EC" id="4.2.1.9"/>
    </reaction>
    <physiologicalReaction direction="left-to-right" evidence="1">
        <dbReference type="Rhea" id="RHEA:24810"/>
    </physiologicalReaction>
</comment>
<comment type="catalytic activity">
    <reaction evidence="1">
        <text>(2R,3R)-2,3-dihydroxy-3-methylpentanoate = (S)-3-methyl-2-oxopentanoate + H2O</text>
        <dbReference type="Rhea" id="RHEA:27694"/>
        <dbReference type="ChEBI" id="CHEBI:15377"/>
        <dbReference type="ChEBI" id="CHEBI:35146"/>
        <dbReference type="ChEBI" id="CHEBI:49258"/>
        <dbReference type="EC" id="4.2.1.9"/>
    </reaction>
    <physiologicalReaction direction="left-to-right" evidence="1">
        <dbReference type="Rhea" id="RHEA:27695"/>
    </physiologicalReaction>
</comment>
<comment type="cofactor">
    <cofactor evidence="1">
        <name>[2Fe-2S] cluster</name>
        <dbReference type="ChEBI" id="CHEBI:190135"/>
    </cofactor>
    <text evidence="1">Binds 1 [2Fe-2S] cluster per subunit. This cluster acts as a Lewis acid cofactor.</text>
</comment>
<comment type="cofactor">
    <cofactor evidence="1">
        <name>Mg(2+)</name>
        <dbReference type="ChEBI" id="CHEBI:18420"/>
    </cofactor>
</comment>
<comment type="pathway">
    <text evidence="1">Amino-acid biosynthesis; L-isoleucine biosynthesis; L-isoleucine from 2-oxobutanoate: step 3/4.</text>
</comment>
<comment type="pathway">
    <text evidence="1">Amino-acid biosynthesis; L-valine biosynthesis; L-valine from pyruvate: step 3/4.</text>
</comment>
<comment type="subunit">
    <text evidence="1">Homodimer.</text>
</comment>
<comment type="similarity">
    <text evidence="1">Belongs to the IlvD/Edd family.</text>
</comment>
<protein>
    <recommendedName>
        <fullName evidence="1">Dihydroxy-acid dehydratase</fullName>
        <shortName evidence="1">DAD</shortName>
        <ecNumber evidence="1">4.2.1.9</ecNumber>
    </recommendedName>
</protein>
<keyword id="KW-0001">2Fe-2S</keyword>
<keyword id="KW-0028">Amino-acid biosynthesis</keyword>
<keyword id="KW-0100">Branched-chain amino acid biosynthesis</keyword>
<keyword id="KW-0408">Iron</keyword>
<keyword id="KW-0411">Iron-sulfur</keyword>
<keyword id="KW-0456">Lyase</keyword>
<keyword id="KW-0460">Magnesium</keyword>
<keyword id="KW-0479">Metal-binding</keyword>
<keyword id="KW-1185">Reference proteome</keyword>
<evidence type="ECO:0000255" key="1">
    <source>
        <dbReference type="HAMAP-Rule" id="MF_00012"/>
    </source>
</evidence>
<dbReference type="EC" id="4.2.1.9" evidence="1"/>
<dbReference type="EMBL" id="CP000410">
    <property type="protein sequence ID" value="ABJ54861.1"/>
    <property type="molecule type" value="Genomic_DNA"/>
</dbReference>
<dbReference type="RefSeq" id="WP_000137358.1">
    <property type="nucleotide sequence ID" value="NZ_JAMLJR010000012.1"/>
</dbReference>
<dbReference type="SMR" id="Q04I44"/>
<dbReference type="PaxDb" id="373153-SPD_1956"/>
<dbReference type="KEGG" id="spd:SPD_1956"/>
<dbReference type="eggNOG" id="COG0129">
    <property type="taxonomic scope" value="Bacteria"/>
</dbReference>
<dbReference type="HOGENOM" id="CLU_014271_4_2_9"/>
<dbReference type="BioCyc" id="SPNE373153:G1G6V-2101-MONOMER"/>
<dbReference type="UniPathway" id="UPA00047">
    <property type="reaction ID" value="UER00057"/>
</dbReference>
<dbReference type="UniPathway" id="UPA00049">
    <property type="reaction ID" value="UER00061"/>
</dbReference>
<dbReference type="Proteomes" id="UP000001452">
    <property type="component" value="Chromosome"/>
</dbReference>
<dbReference type="GO" id="GO:0051537">
    <property type="term" value="F:2 iron, 2 sulfur cluster binding"/>
    <property type="evidence" value="ECO:0007669"/>
    <property type="project" value="UniProtKB-UniRule"/>
</dbReference>
<dbReference type="GO" id="GO:0004160">
    <property type="term" value="F:dihydroxy-acid dehydratase activity"/>
    <property type="evidence" value="ECO:0007669"/>
    <property type="project" value="UniProtKB-UniRule"/>
</dbReference>
<dbReference type="GO" id="GO:0000287">
    <property type="term" value="F:magnesium ion binding"/>
    <property type="evidence" value="ECO:0007669"/>
    <property type="project" value="UniProtKB-UniRule"/>
</dbReference>
<dbReference type="GO" id="GO:0009097">
    <property type="term" value="P:isoleucine biosynthetic process"/>
    <property type="evidence" value="ECO:0007669"/>
    <property type="project" value="UniProtKB-UniRule"/>
</dbReference>
<dbReference type="GO" id="GO:0009099">
    <property type="term" value="P:L-valine biosynthetic process"/>
    <property type="evidence" value="ECO:0007669"/>
    <property type="project" value="UniProtKB-UniRule"/>
</dbReference>
<dbReference type="FunFam" id="3.50.30.80:FF:000001">
    <property type="entry name" value="Dihydroxy-acid dehydratase"/>
    <property type="match status" value="1"/>
</dbReference>
<dbReference type="Gene3D" id="3.50.30.80">
    <property type="entry name" value="IlvD/EDD C-terminal domain-like"/>
    <property type="match status" value="1"/>
</dbReference>
<dbReference type="HAMAP" id="MF_00012">
    <property type="entry name" value="IlvD"/>
    <property type="match status" value="1"/>
</dbReference>
<dbReference type="InterPro" id="IPR050165">
    <property type="entry name" value="DHAD_IlvD/Edd"/>
</dbReference>
<dbReference type="InterPro" id="IPR042096">
    <property type="entry name" value="Dihydro-acid_dehy_C"/>
</dbReference>
<dbReference type="InterPro" id="IPR004404">
    <property type="entry name" value="DihydroxyA_deHydtase"/>
</dbReference>
<dbReference type="InterPro" id="IPR020558">
    <property type="entry name" value="DiOHA_6PGluconate_deHydtase_CS"/>
</dbReference>
<dbReference type="InterPro" id="IPR056740">
    <property type="entry name" value="ILV_EDD_C"/>
</dbReference>
<dbReference type="InterPro" id="IPR000581">
    <property type="entry name" value="ILV_EDD_N"/>
</dbReference>
<dbReference type="InterPro" id="IPR037237">
    <property type="entry name" value="IlvD/EDD_N"/>
</dbReference>
<dbReference type="NCBIfam" id="TIGR00110">
    <property type="entry name" value="ilvD"/>
    <property type="match status" value="1"/>
</dbReference>
<dbReference type="NCBIfam" id="NF002068">
    <property type="entry name" value="PRK00911.1"/>
    <property type="match status" value="1"/>
</dbReference>
<dbReference type="PANTHER" id="PTHR21000">
    <property type="entry name" value="DIHYDROXY-ACID DEHYDRATASE DAD"/>
    <property type="match status" value="1"/>
</dbReference>
<dbReference type="PANTHER" id="PTHR21000:SF5">
    <property type="entry name" value="DIHYDROXY-ACID DEHYDRATASE, MITOCHONDRIAL"/>
    <property type="match status" value="1"/>
</dbReference>
<dbReference type="Pfam" id="PF24877">
    <property type="entry name" value="ILV_EDD_C"/>
    <property type="match status" value="1"/>
</dbReference>
<dbReference type="Pfam" id="PF00920">
    <property type="entry name" value="ILVD_EDD_N"/>
    <property type="match status" value="1"/>
</dbReference>
<dbReference type="SUPFAM" id="SSF143975">
    <property type="entry name" value="IlvD/EDD N-terminal domain-like"/>
    <property type="match status" value="1"/>
</dbReference>
<dbReference type="SUPFAM" id="SSF52016">
    <property type="entry name" value="LeuD/IlvD-like"/>
    <property type="match status" value="1"/>
</dbReference>
<dbReference type="PROSITE" id="PS00886">
    <property type="entry name" value="ILVD_EDD_1"/>
    <property type="match status" value="1"/>
</dbReference>
<dbReference type="PROSITE" id="PS00887">
    <property type="entry name" value="ILVD_EDD_2"/>
    <property type="match status" value="1"/>
</dbReference>
<feature type="chain" id="PRO_1000001069" description="Dihydroxy-acid dehydratase">
    <location>
        <begin position="1"/>
        <end position="567"/>
    </location>
</feature>
<feature type="active site" description="Proton acceptor" evidence="1">
    <location>
        <position position="474"/>
    </location>
</feature>
<feature type="binding site" evidence="1">
    <location>
        <position position="52"/>
    </location>
    <ligand>
        <name>[2Fe-2S] cluster</name>
        <dbReference type="ChEBI" id="CHEBI:190135"/>
    </ligand>
</feature>
<feature type="binding site" evidence="1">
    <location>
        <position position="84"/>
    </location>
    <ligand>
        <name>Mg(2+)</name>
        <dbReference type="ChEBI" id="CHEBI:18420"/>
    </ligand>
</feature>
<feature type="binding site" evidence="1">
    <location>
        <position position="125"/>
    </location>
    <ligand>
        <name>[2Fe-2S] cluster</name>
        <dbReference type="ChEBI" id="CHEBI:190135"/>
    </ligand>
</feature>
<feature type="binding site" evidence="1">
    <location>
        <position position="126"/>
    </location>
    <ligand>
        <name>Mg(2+)</name>
        <dbReference type="ChEBI" id="CHEBI:18420"/>
    </ligand>
</feature>
<feature type="binding site" description="via carbamate group" evidence="1">
    <location>
        <position position="127"/>
    </location>
    <ligand>
        <name>Mg(2+)</name>
        <dbReference type="ChEBI" id="CHEBI:18420"/>
    </ligand>
</feature>
<feature type="binding site" evidence="1">
    <location>
        <position position="197"/>
    </location>
    <ligand>
        <name>[2Fe-2S] cluster</name>
        <dbReference type="ChEBI" id="CHEBI:190135"/>
    </ligand>
</feature>
<feature type="binding site" evidence="1">
    <location>
        <position position="448"/>
    </location>
    <ligand>
        <name>Mg(2+)</name>
        <dbReference type="ChEBI" id="CHEBI:18420"/>
    </ligand>
</feature>
<feature type="modified residue" description="N6-carboxylysine" evidence="1">
    <location>
        <position position="127"/>
    </location>
</feature>
<reference key="1">
    <citation type="journal article" date="2007" name="J. Bacteriol.">
        <title>Genome sequence of Avery's virulent serotype 2 strain D39 of Streptococcus pneumoniae and comparison with that of unencapsulated laboratory strain R6.</title>
        <authorList>
            <person name="Lanie J.A."/>
            <person name="Ng W.-L."/>
            <person name="Kazmierczak K.M."/>
            <person name="Andrzejewski T.M."/>
            <person name="Davidsen T.M."/>
            <person name="Wayne K.J."/>
            <person name="Tettelin H."/>
            <person name="Glass J.I."/>
            <person name="Winkler M.E."/>
        </authorList>
    </citation>
    <scope>NUCLEOTIDE SEQUENCE [LARGE SCALE GENOMIC DNA]</scope>
    <source>
        <strain>D39 / NCTC 7466</strain>
    </source>
</reference>
<proteinExistence type="inferred from homology"/>
<sequence>MTELDKRHRSSIYDSMVKSPNRAMLRATGMTDKDFETSIVGVISTWAENTPCNIHLHDFGKLAKEGVKSAGAWPVQFGTITVADGIAMGTPGMRFSLTSRDIIADSIEAAMSGHNVDAFVAIGGCDKNMPGSMIAIANMDIPAIFAYGGTIAPGNLDGKDIDLVSVFEGIGKWNHGDMTAEDVKRLECNACPGPGGCGGMYTANTMATAIEVLGMSLPGSSSHPAESADKKEDIEAAGRAVVKMLELGLKPSDILTREAFEDAITVTMALGGSTNATLHLLAIAHAANVDLSLEDFNTIQERVPHLADLKPSGQYVFQDLYEVGGVPAVMKYLLANGFLHGDRITCTGKTVAENLADFADLTPGQKVIMPLENPKRADGPLIILNGNLAPDGAVAKVSGVKVRRHVGPAKVFDSEEDAIQAVLTDEIVDGDVVVVRFVGPKGGPGMPEMLSLSSMIVGKGQGDKVALLTDGRFSGGTYGLVVGHIAPEAQDGGPIAYLRTGDIVTVDQDTKEISMAVSEEELEKRKAETTLPPLYSRGVLGKYAHIVSSASRGAVTDFWNMDKSGKK</sequence>
<name>ILVD_STRP2</name>
<accession>Q04I44</accession>
<gene>
    <name evidence="1" type="primary">ilvD</name>
    <name type="ordered locus">SPD_1956</name>
</gene>